<comment type="function">
    <text evidence="1">May help in the organization of the PsaE and PsaF subunits.</text>
</comment>
<comment type="subcellular location">
    <subcellularLocation>
        <location evidence="1">Cellular thylakoid membrane</location>
        <topology evidence="1">Single-pass membrane protein</topology>
    </subcellularLocation>
</comment>
<comment type="similarity">
    <text evidence="1">Belongs to the PsaJ family.</text>
</comment>
<keyword id="KW-0472">Membrane</keyword>
<keyword id="KW-0602">Photosynthesis</keyword>
<keyword id="KW-0603">Photosystem I</keyword>
<keyword id="KW-0793">Thylakoid</keyword>
<keyword id="KW-0812">Transmembrane</keyword>
<keyword id="KW-1133">Transmembrane helix</keyword>
<proteinExistence type="inferred from homology"/>
<protein>
    <recommendedName>
        <fullName evidence="1">Photosystem I reaction center subunit IX</fullName>
    </recommendedName>
</protein>
<dbReference type="EMBL" id="CP000393">
    <property type="protein sequence ID" value="ABG50909.1"/>
    <property type="molecule type" value="Genomic_DNA"/>
</dbReference>
<dbReference type="RefSeq" id="WP_011611284.1">
    <property type="nucleotide sequence ID" value="NC_008312.1"/>
</dbReference>
<dbReference type="SMR" id="Q115B5"/>
<dbReference type="STRING" id="203124.Tery_1633"/>
<dbReference type="KEGG" id="ter:Tery_1633"/>
<dbReference type="eggNOG" id="ENOG5033A5A">
    <property type="taxonomic scope" value="Bacteria"/>
</dbReference>
<dbReference type="HOGENOM" id="CLU_212133_1_1_3"/>
<dbReference type="OrthoDB" id="532702at2"/>
<dbReference type="GO" id="GO:0009522">
    <property type="term" value="C:photosystem I"/>
    <property type="evidence" value="ECO:0007669"/>
    <property type="project" value="UniProtKB-KW"/>
</dbReference>
<dbReference type="GO" id="GO:0031676">
    <property type="term" value="C:plasma membrane-derived thylakoid membrane"/>
    <property type="evidence" value="ECO:0007669"/>
    <property type="project" value="UniProtKB-SubCell"/>
</dbReference>
<dbReference type="GO" id="GO:0015979">
    <property type="term" value="P:photosynthesis"/>
    <property type="evidence" value="ECO:0007669"/>
    <property type="project" value="UniProtKB-UniRule"/>
</dbReference>
<dbReference type="Gene3D" id="1.20.5.510">
    <property type="entry name" value="Single helix bin"/>
    <property type="match status" value="1"/>
</dbReference>
<dbReference type="HAMAP" id="MF_00522">
    <property type="entry name" value="PSI_PsaJ"/>
    <property type="match status" value="1"/>
</dbReference>
<dbReference type="InterPro" id="IPR002615">
    <property type="entry name" value="PSI_PsaJ"/>
</dbReference>
<dbReference type="InterPro" id="IPR036062">
    <property type="entry name" value="PSI_PsaJ_sf"/>
</dbReference>
<dbReference type="NCBIfam" id="NF002743">
    <property type="entry name" value="PRK02733.1"/>
    <property type="match status" value="1"/>
</dbReference>
<dbReference type="PANTHER" id="PTHR36082">
    <property type="match status" value="1"/>
</dbReference>
<dbReference type="PANTHER" id="PTHR36082:SF2">
    <property type="entry name" value="PHOTOSYSTEM I REACTION CENTER SUBUNIT IX"/>
    <property type="match status" value="1"/>
</dbReference>
<dbReference type="Pfam" id="PF01701">
    <property type="entry name" value="PSI_PsaJ"/>
    <property type="match status" value="1"/>
</dbReference>
<dbReference type="SUPFAM" id="SSF81544">
    <property type="entry name" value="Subunit IX of photosystem I reaction centre, PsaJ"/>
    <property type="match status" value="1"/>
</dbReference>
<feature type="chain" id="PRO_0000268765" description="Photosystem I reaction center subunit IX">
    <location>
        <begin position="1"/>
        <end position="41"/>
    </location>
</feature>
<feature type="transmembrane region" description="Helical" evidence="1">
    <location>
        <begin position="7"/>
        <end position="27"/>
    </location>
</feature>
<name>PSAJ_TRIEI</name>
<accession>Q115B5</accession>
<gene>
    <name evidence="1" type="primary">psaJ</name>
    <name type="ordered locus">Tery_1633</name>
</gene>
<organism>
    <name type="scientific">Trichodesmium erythraeum (strain IMS101)</name>
    <dbReference type="NCBI Taxonomy" id="203124"/>
    <lineage>
        <taxon>Bacteria</taxon>
        <taxon>Bacillati</taxon>
        <taxon>Cyanobacteriota</taxon>
        <taxon>Cyanophyceae</taxon>
        <taxon>Oscillatoriophycideae</taxon>
        <taxon>Oscillatoriales</taxon>
        <taxon>Microcoleaceae</taxon>
        <taxon>Trichodesmium</taxon>
    </lineage>
</organism>
<evidence type="ECO:0000255" key="1">
    <source>
        <dbReference type="HAMAP-Rule" id="MF_00522"/>
    </source>
</evidence>
<reference key="1">
    <citation type="journal article" date="2015" name="Proc. Natl. Acad. Sci. U.S.A.">
        <title>Trichodesmium genome maintains abundant, widespread noncoding DNA in situ, despite oligotrophic lifestyle.</title>
        <authorList>
            <person name="Walworth N."/>
            <person name="Pfreundt U."/>
            <person name="Nelson W.C."/>
            <person name="Mincer T."/>
            <person name="Heidelberg J.F."/>
            <person name="Fu F."/>
            <person name="Waterbury J.B."/>
            <person name="Glavina del Rio T."/>
            <person name="Goodwin L."/>
            <person name="Kyrpides N.C."/>
            <person name="Land M.L."/>
            <person name="Woyke T."/>
            <person name="Hutchins D.A."/>
            <person name="Hess W.R."/>
            <person name="Webb E.A."/>
        </authorList>
    </citation>
    <scope>NUCLEOTIDE SEQUENCE [LARGE SCALE GENOMIC DNA]</scope>
    <source>
        <strain>IMS101</strain>
    </source>
</reference>
<sequence>MQDLLKYLSTAPVLATVWMIITAGILIEFNRFFPDLLFHPM</sequence>